<name>HBA_MACSP</name>
<accession>P07402</accession>
<proteinExistence type="evidence at protein level"/>
<dbReference type="SMR" id="P07402"/>
<dbReference type="GO" id="GO:0072562">
    <property type="term" value="C:blood microparticle"/>
    <property type="evidence" value="ECO:0007669"/>
    <property type="project" value="TreeGrafter"/>
</dbReference>
<dbReference type="GO" id="GO:0031838">
    <property type="term" value="C:haptoglobin-hemoglobin complex"/>
    <property type="evidence" value="ECO:0007669"/>
    <property type="project" value="TreeGrafter"/>
</dbReference>
<dbReference type="GO" id="GO:0005833">
    <property type="term" value="C:hemoglobin complex"/>
    <property type="evidence" value="ECO:0007669"/>
    <property type="project" value="InterPro"/>
</dbReference>
<dbReference type="GO" id="GO:0031720">
    <property type="term" value="F:haptoglobin binding"/>
    <property type="evidence" value="ECO:0007669"/>
    <property type="project" value="TreeGrafter"/>
</dbReference>
<dbReference type="GO" id="GO:0020037">
    <property type="term" value="F:heme binding"/>
    <property type="evidence" value="ECO:0007669"/>
    <property type="project" value="InterPro"/>
</dbReference>
<dbReference type="GO" id="GO:0005506">
    <property type="term" value="F:iron ion binding"/>
    <property type="evidence" value="ECO:0007669"/>
    <property type="project" value="InterPro"/>
</dbReference>
<dbReference type="GO" id="GO:0043177">
    <property type="term" value="F:organic acid binding"/>
    <property type="evidence" value="ECO:0007669"/>
    <property type="project" value="TreeGrafter"/>
</dbReference>
<dbReference type="GO" id="GO:0019825">
    <property type="term" value="F:oxygen binding"/>
    <property type="evidence" value="ECO:0007669"/>
    <property type="project" value="InterPro"/>
</dbReference>
<dbReference type="GO" id="GO:0005344">
    <property type="term" value="F:oxygen carrier activity"/>
    <property type="evidence" value="ECO:0007669"/>
    <property type="project" value="UniProtKB-KW"/>
</dbReference>
<dbReference type="GO" id="GO:0004601">
    <property type="term" value="F:peroxidase activity"/>
    <property type="evidence" value="ECO:0007669"/>
    <property type="project" value="TreeGrafter"/>
</dbReference>
<dbReference type="GO" id="GO:0042744">
    <property type="term" value="P:hydrogen peroxide catabolic process"/>
    <property type="evidence" value="ECO:0007669"/>
    <property type="project" value="TreeGrafter"/>
</dbReference>
<dbReference type="CDD" id="cd08927">
    <property type="entry name" value="Hb-alpha-like"/>
    <property type="match status" value="1"/>
</dbReference>
<dbReference type="FunFam" id="1.10.490.10:FF:000002">
    <property type="entry name" value="Hemoglobin subunit alpha"/>
    <property type="match status" value="1"/>
</dbReference>
<dbReference type="Gene3D" id="1.10.490.10">
    <property type="entry name" value="Globins"/>
    <property type="match status" value="1"/>
</dbReference>
<dbReference type="InterPro" id="IPR000971">
    <property type="entry name" value="Globin"/>
</dbReference>
<dbReference type="InterPro" id="IPR009050">
    <property type="entry name" value="Globin-like_sf"/>
</dbReference>
<dbReference type="InterPro" id="IPR012292">
    <property type="entry name" value="Globin/Proto"/>
</dbReference>
<dbReference type="InterPro" id="IPR002338">
    <property type="entry name" value="Hemoglobin_a-typ"/>
</dbReference>
<dbReference type="InterPro" id="IPR050056">
    <property type="entry name" value="Hemoglobin_oxygen_transport"/>
</dbReference>
<dbReference type="InterPro" id="IPR002339">
    <property type="entry name" value="Hemoglobin_pi"/>
</dbReference>
<dbReference type="PANTHER" id="PTHR11442">
    <property type="entry name" value="HEMOGLOBIN FAMILY MEMBER"/>
    <property type="match status" value="1"/>
</dbReference>
<dbReference type="PANTHER" id="PTHR11442:SF48">
    <property type="entry name" value="HEMOGLOBIN SUBUNIT ALPHA"/>
    <property type="match status" value="1"/>
</dbReference>
<dbReference type="Pfam" id="PF00042">
    <property type="entry name" value="Globin"/>
    <property type="match status" value="1"/>
</dbReference>
<dbReference type="PRINTS" id="PR00612">
    <property type="entry name" value="ALPHAHAEM"/>
</dbReference>
<dbReference type="PRINTS" id="PR00815">
    <property type="entry name" value="PIHAEM"/>
</dbReference>
<dbReference type="SUPFAM" id="SSF46458">
    <property type="entry name" value="Globin-like"/>
    <property type="match status" value="1"/>
</dbReference>
<dbReference type="PROSITE" id="PS01033">
    <property type="entry name" value="GLOBIN"/>
    <property type="match status" value="1"/>
</dbReference>
<evidence type="ECO:0000250" key="1">
    <source>
        <dbReference type="UniProtKB" id="P01942"/>
    </source>
</evidence>
<evidence type="ECO:0000250" key="2">
    <source>
        <dbReference type="UniProtKB" id="P69905"/>
    </source>
</evidence>
<evidence type="ECO:0000255" key="3">
    <source>
        <dbReference type="PROSITE-ProRule" id="PRU00238"/>
    </source>
</evidence>
<evidence type="ECO:0000269" key="4">
    <source>
    </source>
</evidence>
<keyword id="KW-0007">Acetylation</keyword>
<keyword id="KW-0903">Direct protein sequencing</keyword>
<keyword id="KW-0349">Heme</keyword>
<keyword id="KW-0408">Iron</keyword>
<keyword id="KW-0479">Metal-binding</keyword>
<keyword id="KW-0561">Oxygen transport</keyword>
<keyword id="KW-0597">Phosphoprotein</keyword>
<keyword id="KW-0813">Transport</keyword>
<feature type="chain" id="PRO_0000052683" description="Hemoglobin subunit alpha-1/2">
    <location>
        <begin position="1"/>
        <end position="141"/>
    </location>
</feature>
<feature type="domain" description="Globin" evidence="3">
    <location>
        <begin position="1"/>
        <end position="141"/>
    </location>
</feature>
<feature type="binding site" evidence="3">
    <location>
        <position position="58"/>
    </location>
    <ligand>
        <name>O2</name>
        <dbReference type="ChEBI" id="CHEBI:15379"/>
    </ligand>
</feature>
<feature type="binding site" description="proximal binding residue" evidence="3">
    <location>
        <position position="87"/>
    </location>
    <ligand>
        <name>heme b</name>
        <dbReference type="ChEBI" id="CHEBI:60344"/>
    </ligand>
    <ligandPart>
        <name>Fe</name>
        <dbReference type="ChEBI" id="CHEBI:18248"/>
    </ligandPart>
</feature>
<feature type="modified residue" description="Phosphoserine" evidence="2">
    <location>
        <position position="3"/>
    </location>
</feature>
<feature type="modified residue" description="N6-succinyllysine" evidence="1">
    <location>
        <position position="7"/>
    </location>
</feature>
<feature type="modified residue" description="Phosphothreonine" evidence="2">
    <location>
        <position position="8"/>
    </location>
</feature>
<feature type="modified residue" description="N6-succinyllysine" evidence="1">
    <location>
        <position position="11"/>
    </location>
</feature>
<feature type="modified residue" description="N6-acetyllysine; alternate" evidence="2">
    <location>
        <position position="16"/>
    </location>
</feature>
<feature type="modified residue" description="N6-succinyllysine; alternate" evidence="1">
    <location>
        <position position="16"/>
    </location>
</feature>
<feature type="modified residue" description="Phosphotyrosine" evidence="2">
    <location>
        <position position="24"/>
    </location>
</feature>
<feature type="modified residue" description="Phosphoserine" evidence="2">
    <location>
        <position position="35"/>
    </location>
</feature>
<feature type="modified residue" description="N6-succinyllysine" evidence="1">
    <location>
        <position position="40"/>
    </location>
</feature>
<feature type="modified residue" description="Phosphoserine" evidence="2">
    <location>
        <position position="49"/>
    </location>
</feature>
<feature type="modified residue" description="Phosphoserine" evidence="1">
    <location>
        <position position="102"/>
    </location>
</feature>
<feature type="modified residue" description="Phosphothreonine" evidence="1">
    <location>
        <position position="108"/>
    </location>
</feature>
<feature type="modified residue" description="Phosphoserine" evidence="1">
    <location>
        <position position="124"/>
    </location>
</feature>
<feature type="modified residue" description="Phosphoserine" evidence="1">
    <location>
        <position position="131"/>
    </location>
</feature>
<feature type="modified residue" description="Phosphothreonine" evidence="1">
    <location>
        <position position="134"/>
    </location>
</feature>
<feature type="modified residue" description="Phosphothreonine" evidence="1">
    <location>
        <position position="137"/>
    </location>
</feature>
<feature type="modified residue" description="Phosphoserine" evidence="1">
    <location>
        <position position="138"/>
    </location>
</feature>
<feature type="sequence variant" description="In alpha-2." evidence="4">
    <original>D</original>
    <variation>G</variation>
    <location>
        <position position="15"/>
    </location>
</feature>
<comment type="function">
    <text>Involved in oxygen transport from the lung to the various peripheral tissues.</text>
</comment>
<comment type="subunit">
    <text>Heterotetramer of two alpha chains and two beta chains.</text>
</comment>
<comment type="tissue specificity">
    <text>Red blood cells.</text>
</comment>
<comment type="polymorphism">
    <text evidence="4">There are two alleles. The sequence shown is that of alpha-1.</text>
</comment>
<comment type="similarity">
    <text evidence="3">Belongs to the globin family.</text>
</comment>
<organism>
    <name type="scientific">Macaca speciosa</name>
    <name type="common">Stump-tail macaque</name>
    <dbReference type="NCBI Taxonomy" id="9553"/>
    <lineage>
        <taxon>Eukaryota</taxon>
        <taxon>Metazoa</taxon>
        <taxon>Chordata</taxon>
        <taxon>Craniata</taxon>
        <taxon>Vertebrata</taxon>
        <taxon>Euteleostomi</taxon>
        <taxon>Mammalia</taxon>
        <taxon>Eutheria</taxon>
        <taxon>Euarchontoglires</taxon>
        <taxon>Primates</taxon>
        <taxon>Haplorrhini</taxon>
        <taxon>Catarrhini</taxon>
        <taxon>Cercopithecidae</taxon>
        <taxon>Cercopithecinae</taxon>
        <taxon>Macaca</taxon>
    </lineage>
</organism>
<sequence>VLSPADKTNVKAAWDKVGGHAGEYGAEALERMFLSFPTTKTYFPHFDLSHGSAQVKGHGKKVADALTLAVGHVDDMPHALSALSDLHAHKLRVDPVNFKLLSHCLLVTLAAHLPAEFTPAVHASLDKFLASVSTVLTSKYR</sequence>
<reference key="1">
    <citation type="journal article" date="1985" name="Biol. Chem. Hoppe-Seyler">
        <title>Amino-acid sequences of the two major components of adult hemoglobins from the stump-tail monkey, Macaca speciosa.</title>
        <authorList>
            <person name="Maita T."/>
            <person name="Tanioka Y."/>
            <person name="Nakayama S."/>
            <person name="Matsuda G."/>
        </authorList>
    </citation>
    <scope>PROTEIN SEQUENCE</scope>
</reference>
<protein>
    <recommendedName>
        <fullName>Hemoglobin subunit alpha-1/2</fullName>
    </recommendedName>
    <alternativeName>
        <fullName>Alpha-1/2-globin</fullName>
    </alternativeName>
    <alternativeName>
        <fullName>Hemoglobin alpha-1/2 chain</fullName>
    </alternativeName>
</protein>